<gene>
    <name evidence="1" type="primary">SCT</name>
</gene>
<feature type="peptide" id="PRO_0000043935" description="Secretin" evidence="4">
    <location>
        <begin position="1"/>
        <end position="27"/>
    </location>
</feature>
<feature type="modified residue" description="Valine amide" evidence="4">
    <location>
        <position position="27"/>
    </location>
</feature>
<proteinExistence type="evidence at protein level"/>
<name>SECR_CAVPO</name>
<reference key="1">
    <citation type="journal article" date="1990" name="Biochim. Biophys. Acta">
        <title>Purification and amino acid sequence of vasoactive intestinal peptide, peptide histidine isoleucinamide (1-27) and secretin from the small intestine of guinea pig.</title>
        <authorList>
            <person name="Buscail L."/>
            <person name="Cauvin A."/>
            <person name="Gourlet P."/>
            <person name="Gossen D."/>
            <person name="de Neef P."/>
            <person name="Rathe J."/>
            <person name="Robberecht P."/>
            <person name="Vandermeers-Piret M.-C."/>
            <person name="Vandermeers A."/>
            <person name="Christophe J."/>
        </authorList>
    </citation>
    <scope>PROTEIN SEQUENCE</scope>
    <scope>SUBCELLULAR LOCATION</scope>
    <scope>AMIDATION AT VAL-27</scope>
    <source>
        <tissue>Small intestine</tissue>
    </source>
</reference>
<organism>
    <name type="scientific">Cavia porcellus</name>
    <name type="common">Guinea pig</name>
    <dbReference type="NCBI Taxonomy" id="10141"/>
    <lineage>
        <taxon>Eukaryota</taxon>
        <taxon>Metazoa</taxon>
        <taxon>Chordata</taxon>
        <taxon>Craniata</taxon>
        <taxon>Vertebrata</taxon>
        <taxon>Euteleostomi</taxon>
        <taxon>Mammalia</taxon>
        <taxon>Eutheria</taxon>
        <taxon>Euarchontoglires</taxon>
        <taxon>Glires</taxon>
        <taxon>Rodentia</taxon>
        <taxon>Hystricomorpha</taxon>
        <taxon>Caviidae</taxon>
        <taxon>Cavia</taxon>
    </lineage>
</organism>
<accession>P63297</accession>
<accession>P01279</accession>
<accession>Q9TR13</accession>
<evidence type="ECO:0000250" key="1">
    <source>
        <dbReference type="UniProtKB" id="P09683"/>
    </source>
</evidence>
<evidence type="ECO:0000250" key="2">
    <source>
        <dbReference type="UniProtKB" id="P11384"/>
    </source>
</evidence>
<evidence type="ECO:0000250" key="3">
    <source>
        <dbReference type="UniProtKB" id="Q08535"/>
    </source>
</evidence>
<evidence type="ECO:0000269" key="4">
    <source>
    </source>
</evidence>
<evidence type="ECO:0000303" key="5">
    <source>
    </source>
</evidence>
<evidence type="ECO:0000305" key="6"/>
<protein>
    <recommendedName>
        <fullName evidence="5">Secretin</fullName>
    </recommendedName>
</protein>
<dbReference type="PIR" id="B57082">
    <property type="entry name" value="B57082"/>
</dbReference>
<dbReference type="BMRB" id="P63297"/>
<dbReference type="SMR" id="P63297"/>
<dbReference type="STRING" id="10141.ENSCPOP00000017313"/>
<dbReference type="eggNOG" id="ENOG502R8F0">
    <property type="taxonomic scope" value="Eukaryota"/>
</dbReference>
<dbReference type="HOGENOM" id="CLU_221718_0_0_1"/>
<dbReference type="InParanoid" id="P63297"/>
<dbReference type="Proteomes" id="UP000005447">
    <property type="component" value="Unassembled WGS sequence"/>
</dbReference>
<dbReference type="GO" id="GO:0005615">
    <property type="term" value="C:extracellular space"/>
    <property type="evidence" value="ECO:0000250"/>
    <property type="project" value="UniProtKB"/>
</dbReference>
<dbReference type="GO" id="GO:0046659">
    <property type="term" value="F:digestive hormone activity"/>
    <property type="evidence" value="ECO:0000250"/>
    <property type="project" value="UniProtKB"/>
</dbReference>
<dbReference type="GO" id="GO:0005179">
    <property type="term" value="F:hormone activity"/>
    <property type="evidence" value="ECO:0000250"/>
    <property type="project" value="UniProtKB"/>
</dbReference>
<dbReference type="GO" id="GO:0007189">
    <property type="term" value="P:adenylate cyclase-activating G protein-coupled receptor signaling pathway"/>
    <property type="evidence" value="ECO:0000250"/>
    <property type="project" value="UniProtKB"/>
</dbReference>
<dbReference type="GO" id="GO:0002024">
    <property type="term" value="P:diet induced thermogenesis"/>
    <property type="evidence" value="ECO:0000250"/>
    <property type="project" value="UniProtKB"/>
</dbReference>
<dbReference type="GO" id="GO:0021766">
    <property type="term" value="P:hippocampus development"/>
    <property type="evidence" value="ECO:0000250"/>
    <property type="project" value="UniProtKB"/>
</dbReference>
<dbReference type="GO" id="GO:0009992">
    <property type="term" value="P:intracellular water homeostasis"/>
    <property type="evidence" value="ECO:0000250"/>
    <property type="project" value="UniProtKB"/>
</dbReference>
<dbReference type="GO" id="GO:1903640">
    <property type="term" value="P:negative regulation of gastrin-induced gastric acid secretion"/>
    <property type="evidence" value="ECO:0007669"/>
    <property type="project" value="TreeGrafter"/>
</dbReference>
<dbReference type="GO" id="GO:0050996">
    <property type="term" value="P:positive regulation of lipid catabolic process"/>
    <property type="evidence" value="ECO:0000250"/>
    <property type="project" value="UniProtKB"/>
</dbReference>
<dbReference type="GO" id="GO:0090187">
    <property type="term" value="P:positive regulation of pancreatic juice secretion"/>
    <property type="evidence" value="ECO:0007669"/>
    <property type="project" value="TreeGrafter"/>
</dbReference>
<dbReference type="GO" id="GO:0090274">
    <property type="term" value="P:positive regulation of somatostatin secretion"/>
    <property type="evidence" value="ECO:0007669"/>
    <property type="project" value="TreeGrafter"/>
</dbReference>
<dbReference type="GO" id="GO:0032098">
    <property type="term" value="P:regulation of appetite"/>
    <property type="evidence" value="ECO:0000250"/>
    <property type="project" value="UniProtKB"/>
</dbReference>
<dbReference type="GO" id="GO:0048167">
    <property type="term" value="P:regulation of synaptic plasticity"/>
    <property type="evidence" value="ECO:0000250"/>
    <property type="project" value="UniProtKB"/>
</dbReference>
<dbReference type="GO" id="GO:0031667">
    <property type="term" value="P:response to nutrient levels"/>
    <property type="evidence" value="ECO:0000250"/>
    <property type="project" value="UniProtKB"/>
</dbReference>
<dbReference type="Gene3D" id="6.10.250.590">
    <property type="match status" value="1"/>
</dbReference>
<dbReference type="InterPro" id="IPR000532">
    <property type="entry name" value="Glucagon_GIP_secretin_VIP"/>
</dbReference>
<dbReference type="InterPro" id="IPR015675">
    <property type="entry name" value="Prosecretin"/>
</dbReference>
<dbReference type="PANTHER" id="PTHR17378">
    <property type="entry name" value="SECRETIN"/>
    <property type="match status" value="1"/>
</dbReference>
<dbReference type="PANTHER" id="PTHR17378:SF1">
    <property type="entry name" value="SECRETIN"/>
    <property type="match status" value="1"/>
</dbReference>
<dbReference type="Pfam" id="PF00123">
    <property type="entry name" value="Hormone_2"/>
    <property type="match status" value="1"/>
</dbReference>
<dbReference type="SMART" id="SM00070">
    <property type="entry name" value="GLUCA"/>
    <property type="match status" value="1"/>
</dbReference>
<dbReference type="PROSITE" id="PS00260">
    <property type="entry name" value="GLUCAGON"/>
    <property type="match status" value="1"/>
</dbReference>
<keyword id="KW-0027">Amidation</keyword>
<keyword id="KW-0903">Direct protein sequencing</keyword>
<keyword id="KW-0372">Hormone</keyword>
<keyword id="KW-1185">Reference proteome</keyword>
<keyword id="KW-0964">Secreted</keyword>
<comment type="function">
    <text evidence="2 3">Hormone involved in different processes, such as regulation of the pH of the duodenal content, food intake and water homeostasis. Exerts its biological effects by binding to secretin receptor (SCTR), a G-protein coupled receptor expressed in the basolateral domain of several cells. Acts as a key gastrointestinal hormone by regulating the pH of the duodenal content. Secreted by S cells of the duodenum in the crypts of Lieberkuehn and regulates the pH of the duodenum by (1) inhibiting the secretion of gastric acid from the parietal cells of the stomach and (2) stimulating the production of bicarbonate (NaHCO(3)) from the ductal cells of the pancreas (By similarity). Production of bicarbonate is essential to neutralize the pH and ensure no damage is done to the small intestine by the gastric acid. In addition to regulating the pH of the duodenal content, plays a central role in diet induced thermogenesis: acts as a non-sympathetic brown fat (BAT) activator mediating prandial thermogenesis, which consequentially induces satiation. Mechanistically, secretin released by the gut after a meal binds to secretin receptor (SCTR) in brown adipocytes, activating brown fat thermogenesis by stimulating lipolysis, which is sensed in the brain and promotes satiation. Also able to stimulate lipolysis in white adipocytes (By similarity). Also plays an important role in cellular osmoregulation: released into the systemic circulation in response to hyperosmolality and acts at different levels in the hypothalamus, pituitary and kidney to regulate water homeostasis (By similarity). Also plays a role in the central nervous system, possibly by acting as a neuropeptide hormone: required for hippocampal synaptic function and neural progenitor cells maintenance (By similarity).</text>
</comment>
<comment type="subcellular location">
    <subcellularLocation>
        <location evidence="4">Secreted</location>
    </subcellularLocation>
</comment>
<comment type="similarity">
    <text evidence="6">Belongs to the glucagon family.</text>
</comment>
<sequence>HSDGTFTSELSRLRDSARLQRLLQGLV</sequence>